<evidence type="ECO:0000250" key="1"/>
<evidence type="ECO:0000255" key="2"/>
<evidence type="ECO:0000269" key="3">
    <source>
    </source>
</evidence>
<evidence type="ECO:0000305" key="4"/>
<keyword id="KW-0011">Acute phase</keyword>
<keyword id="KW-0903">Direct protein sequencing</keyword>
<keyword id="KW-0325">Glycoprotein</keyword>
<keyword id="KW-0646">Protease inhibitor</keyword>
<keyword id="KW-1185">Reference proteome</keyword>
<keyword id="KW-0964">Secreted</keyword>
<keyword id="KW-0722">Serine protease inhibitor</keyword>
<keyword id="KW-0732">Signal</keyword>
<comment type="function">
    <text>Inhibits elastase, chymotrypsin, cathepsin G, plasmin, and trypsin.</text>
</comment>
<comment type="subcellular location">
    <subcellularLocation>
        <location>Secreted</location>
    </subcellularLocation>
</comment>
<comment type="induction">
    <text>APF rose about 2-fold during the acute phase reaction.</text>
</comment>
<comment type="domain">
    <text evidence="1">The reactive center loop (RCL) extends out from the body of the protein and directs binding to the target protease. The protease cleaves the serpin at the reactive site within the RCL, establishing a covalent linkage between the carboxyl group of the serpin reactive site and the serine hydroxyl of the protease. The resulting inactive serpin-protease complex is highly stable (By similarity).</text>
</comment>
<comment type="similarity">
    <text evidence="4">Belongs to the serpin family.</text>
</comment>
<proteinExistence type="evidence at protein level"/>
<dbReference type="EMBL" id="M57271">
    <property type="protein sequence ID" value="AAA62804.1"/>
    <property type="molecule type" value="mRNA"/>
</dbReference>
<dbReference type="PIR" id="B39088">
    <property type="entry name" value="B39088"/>
</dbReference>
<dbReference type="SMR" id="P22324"/>
<dbReference type="FunCoup" id="P22324">
    <property type="interactions" value="390"/>
</dbReference>
<dbReference type="STRING" id="10141.ENSCPOP00000013843"/>
<dbReference type="MEROPS" id="I04.001"/>
<dbReference type="eggNOG" id="KOG2392">
    <property type="taxonomic scope" value="Eukaryota"/>
</dbReference>
<dbReference type="InParanoid" id="P22324"/>
<dbReference type="Proteomes" id="UP000005447">
    <property type="component" value="Unassembled WGS sequence"/>
</dbReference>
<dbReference type="GO" id="GO:0005615">
    <property type="term" value="C:extracellular space"/>
    <property type="evidence" value="ECO:0007669"/>
    <property type="project" value="InterPro"/>
</dbReference>
<dbReference type="GO" id="GO:0004867">
    <property type="term" value="F:serine-type endopeptidase inhibitor activity"/>
    <property type="evidence" value="ECO:0007669"/>
    <property type="project" value="UniProtKB-KW"/>
</dbReference>
<dbReference type="GO" id="GO:0006953">
    <property type="term" value="P:acute-phase response"/>
    <property type="evidence" value="ECO:0007669"/>
    <property type="project" value="UniProtKB-KW"/>
</dbReference>
<dbReference type="CDD" id="cd02056">
    <property type="entry name" value="serpinA1_A1AT"/>
    <property type="match status" value="1"/>
</dbReference>
<dbReference type="FunFam" id="2.30.39.10:FF:000003">
    <property type="entry name" value="alpha-1-antitrypsin isoform X1"/>
    <property type="match status" value="1"/>
</dbReference>
<dbReference type="FunFam" id="3.30.497.10:FF:000001">
    <property type="entry name" value="Serine protease inhibitor"/>
    <property type="match status" value="1"/>
</dbReference>
<dbReference type="FunFam" id="2.10.310.10:FF:000001">
    <property type="entry name" value="Serpin family A member 1"/>
    <property type="match status" value="1"/>
</dbReference>
<dbReference type="Gene3D" id="2.30.39.10">
    <property type="entry name" value="Alpha-1-antitrypsin, domain 1"/>
    <property type="match status" value="1"/>
</dbReference>
<dbReference type="Gene3D" id="3.30.497.10">
    <property type="entry name" value="Antithrombin, subunit I, domain 2"/>
    <property type="match status" value="1"/>
</dbReference>
<dbReference type="Gene3D" id="2.10.310.10">
    <property type="entry name" value="Serpins superfamily"/>
    <property type="match status" value="1"/>
</dbReference>
<dbReference type="InterPro" id="IPR023795">
    <property type="entry name" value="Serpin_CS"/>
</dbReference>
<dbReference type="InterPro" id="IPR023796">
    <property type="entry name" value="Serpin_dom"/>
</dbReference>
<dbReference type="InterPro" id="IPR000215">
    <property type="entry name" value="Serpin_fam"/>
</dbReference>
<dbReference type="InterPro" id="IPR036186">
    <property type="entry name" value="Serpin_sf"/>
</dbReference>
<dbReference type="InterPro" id="IPR042178">
    <property type="entry name" value="Serpin_sf_1"/>
</dbReference>
<dbReference type="InterPro" id="IPR042185">
    <property type="entry name" value="Serpin_sf_2"/>
</dbReference>
<dbReference type="PANTHER" id="PTHR11461:SF165">
    <property type="entry name" value="ALPHA-1-ANTITRYPSIN"/>
    <property type="match status" value="1"/>
</dbReference>
<dbReference type="PANTHER" id="PTHR11461">
    <property type="entry name" value="SERINE PROTEASE INHIBITOR, SERPIN"/>
    <property type="match status" value="1"/>
</dbReference>
<dbReference type="Pfam" id="PF00079">
    <property type="entry name" value="Serpin"/>
    <property type="match status" value="1"/>
</dbReference>
<dbReference type="SMART" id="SM00093">
    <property type="entry name" value="SERPIN"/>
    <property type="match status" value="1"/>
</dbReference>
<dbReference type="SUPFAM" id="SSF56574">
    <property type="entry name" value="Serpins"/>
    <property type="match status" value="1"/>
</dbReference>
<dbReference type="PROSITE" id="PS00284">
    <property type="entry name" value="SERPIN"/>
    <property type="match status" value="1"/>
</dbReference>
<name>A1AF_CAVPO</name>
<organism>
    <name type="scientific">Cavia porcellus</name>
    <name type="common">Guinea pig</name>
    <dbReference type="NCBI Taxonomy" id="10141"/>
    <lineage>
        <taxon>Eukaryota</taxon>
        <taxon>Metazoa</taxon>
        <taxon>Chordata</taxon>
        <taxon>Craniata</taxon>
        <taxon>Vertebrata</taxon>
        <taxon>Euteleostomi</taxon>
        <taxon>Mammalia</taxon>
        <taxon>Eutheria</taxon>
        <taxon>Euarchontoglires</taxon>
        <taxon>Glires</taxon>
        <taxon>Rodentia</taxon>
        <taxon>Hystricomorpha</taxon>
        <taxon>Caviidae</taxon>
        <taxon>Cavia</taxon>
    </lineage>
</organism>
<sequence>SAIPRGLLLLAGLCCLVFGIMAEDAQVAQGPSQQIPRSLAHFAHSMYRVLTQQSNTSNIFFSPVSIATALAMVSLGAKGDTHTQILWGLEFNLTEIAEADIHDGFQNLLHTLNRPHSEHELTTGNGLFLDQKLKLKEKFSEDVKTLYHAEAFPTNFSNPKEAEKQINAYVEKGTQGKIVDLVKDLSADTVLALVNYIFFRGKWEKPFDVKHTTQEDFLVDMNTTVNVPMMKRQGMYKAFHCSTIQSWVLLLDYEGNVTTLFLLPDKGKMQHLEETLTPELIFKFARKTERMFANVHLPKLSISGTYDLKEVLGHLGITNVFSGAADLSGITEDMPLKISKGLHKALLTIDEKGTEAAGATELEITPHSVPQDLFFNKPFLFLIIDHSTDTPLFVGKVMDPTKK</sequence>
<protein>
    <recommendedName>
        <fullName>Alpha-1-antiproteinase F</fullName>
        <shortName>APF</shortName>
    </recommendedName>
    <alternativeName>
        <fullName>Alpha-1-antitrypsin</fullName>
    </alternativeName>
    <alternativeName>
        <fullName>Alpha-1-proteinase inhibitor</fullName>
    </alternativeName>
</protein>
<reference key="1">
    <citation type="journal article" date="1991" name="J. Biol. Chem.">
        <title>Molecular cloning and sequence analysis of cDNAs coding for guinea pig alpha 1-antiproteinases S and F and contrapsin.</title>
        <authorList>
            <person name="Suzuki Y."/>
            <person name="Yoshida K."/>
            <person name="Honda E."/>
            <person name="Sinohara H."/>
        </authorList>
    </citation>
    <scope>NUCLEOTIDE SEQUENCE [MRNA]</scope>
    <scope>PROTEIN SEQUENCE OF 23-42 AND 73-91</scope>
</reference>
<accession>P22324</accession>
<feature type="signal peptide" evidence="3">
    <location>
        <begin position="1" status="less than"/>
        <end position="22"/>
    </location>
</feature>
<feature type="chain" id="PRO_0000032381" description="Alpha-1-antiproteinase F">
    <location>
        <begin position="23"/>
        <end position="403"/>
    </location>
</feature>
<feature type="region of interest" description="RCL">
    <location>
        <begin position="358"/>
        <end position="377"/>
    </location>
</feature>
<feature type="site" description="Reactive bond; unorthodox type">
    <location>
        <begin position="367"/>
        <end position="368"/>
    </location>
</feature>
<feature type="glycosylation site" description="N-linked (GlcNAc...) asparagine" evidence="2">
    <location>
        <position position="55"/>
    </location>
</feature>
<feature type="glycosylation site" description="N-linked (GlcNAc...) asparagine" evidence="2">
    <location>
        <position position="92"/>
    </location>
</feature>
<feature type="glycosylation site" description="N-linked (GlcNAc...) asparagine" evidence="2">
    <location>
        <position position="155"/>
    </location>
</feature>
<feature type="glycosylation site" description="N-linked (GlcNAc...) asparagine" evidence="2">
    <location>
        <position position="222"/>
    </location>
</feature>
<feature type="glycosylation site" description="N-linked (GlcNAc...) asparagine" evidence="2">
    <location>
        <position position="256"/>
    </location>
</feature>
<feature type="non-terminal residue">
    <location>
        <position position="1"/>
    </location>
</feature>